<protein>
    <recommendedName>
        <fullName evidence="1">ATP synthase subunit c</fullName>
    </recommendedName>
    <alternativeName>
        <fullName evidence="1">ATP synthase F(0) sector subunit c</fullName>
    </alternativeName>
    <alternativeName>
        <fullName evidence="1">F-type ATPase subunit c</fullName>
        <shortName evidence="1">F-ATPase subunit c</shortName>
    </alternativeName>
    <alternativeName>
        <fullName evidence="1">Lipid-binding protein</fullName>
    </alternativeName>
</protein>
<proteinExistence type="inferred from homology"/>
<name>ATPL_NEOSM</name>
<organism>
    <name type="scientific">Neorickettsia sennetsu (strain ATCC VR-367 / Miyayama)</name>
    <name type="common">Ehrlichia sennetsu</name>
    <dbReference type="NCBI Taxonomy" id="222891"/>
    <lineage>
        <taxon>Bacteria</taxon>
        <taxon>Pseudomonadati</taxon>
        <taxon>Pseudomonadota</taxon>
        <taxon>Alphaproteobacteria</taxon>
        <taxon>Rickettsiales</taxon>
        <taxon>Anaplasmataceae</taxon>
        <taxon>Neorickettsia</taxon>
    </lineage>
</organism>
<accession>Q2GE12</accession>
<sequence>MELEGLKFLGIGLSVVGMLGAAIGVSNIFSMMLNGIARNPESEEKLKKYVYAGAALTEAMGLFSFVLALLLIFVA</sequence>
<evidence type="ECO:0000255" key="1">
    <source>
        <dbReference type="HAMAP-Rule" id="MF_01396"/>
    </source>
</evidence>
<feature type="chain" id="PRO_1000184423" description="ATP synthase subunit c">
    <location>
        <begin position="1"/>
        <end position="75"/>
    </location>
</feature>
<feature type="transmembrane region" description="Helical" evidence="1">
    <location>
        <begin position="8"/>
        <end position="28"/>
    </location>
</feature>
<feature type="transmembrane region" description="Helical" evidence="1">
    <location>
        <begin position="54"/>
        <end position="74"/>
    </location>
</feature>
<feature type="site" description="Reversibly protonated during proton transport" evidence="1">
    <location>
        <position position="58"/>
    </location>
</feature>
<gene>
    <name evidence="1" type="primary">atpE</name>
    <name type="ordered locus">NSE_0397</name>
</gene>
<dbReference type="EMBL" id="CP000237">
    <property type="protein sequence ID" value="ABD46329.1"/>
    <property type="molecule type" value="Genomic_DNA"/>
</dbReference>
<dbReference type="RefSeq" id="WP_011451790.1">
    <property type="nucleotide sequence ID" value="NC_007798.1"/>
</dbReference>
<dbReference type="SMR" id="Q2GE12"/>
<dbReference type="STRING" id="222891.NSE_0397"/>
<dbReference type="KEGG" id="nse:NSE_0397"/>
<dbReference type="eggNOG" id="COG0636">
    <property type="taxonomic scope" value="Bacteria"/>
</dbReference>
<dbReference type="HOGENOM" id="CLU_148047_4_0_5"/>
<dbReference type="OrthoDB" id="9811093at2"/>
<dbReference type="Proteomes" id="UP000001942">
    <property type="component" value="Chromosome"/>
</dbReference>
<dbReference type="GO" id="GO:0005886">
    <property type="term" value="C:plasma membrane"/>
    <property type="evidence" value="ECO:0007669"/>
    <property type="project" value="UniProtKB-SubCell"/>
</dbReference>
<dbReference type="GO" id="GO:0045259">
    <property type="term" value="C:proton-transporting ATP synthase complex"/>
    <property type="evidence" value="ECO:0007669"/>
    <property type="project" value="UniProtKB-KW"/>
</dbReference>
<dbReference type="GO" id="GO:0033177">
    <property type="term" value="C:proton-transporting two-sector ATPase complex, proton-transporting domain"/>
    <property type="evidence" value="ECO:0007669"/>
    <property type="project" value="InterPro"/>
</dbReference>
<dbReference type="GO" id="GO:0008289">
    <property type="term" value="F:lipid binding"/>
    <property type="evidence" value="ECO:0007669"/>
    <property type="project" value="UniProtKB-KW"/>
</dbReference>
<dbReference type="GO" id="GO:0046933">
    <property type="term" value="F:proton-transporting ATP synthase activity, rotational mechanism"/>
    <property type="evidence" value="ECO:0007669"/>
    <property type="project" value="UniProtKB-UniRule"/>
</dbReference>
<dbReference type="CDD" id="cd18182">
    <property type="entry name" value="ATP-synt_Fo_c_ATP5G3"/>
    <property type="match status" value="1"/>
</dbReference>
<dbReference type="Gene3D" id="1.20.20.10">
    <property type="entry name" value="F1F0 ATP synthase subunit C"/>
    <property type="match status" value="1"/>
</dbReference>
<dbReference type="HAMAP" id="MF_01396">
    <property type="entry name" value="ATP_synth_c_bact"/>
    <property type="match status" value="1"/>
</dbReference>
<dbReference type="InterPro" id="IPR000454">
    <property type="entry name" value="ATP_synth_F0_csu"/>
</dbReference>
<dbReference type="InterPro" id="IPR038662">
    <property type="entry name" value="ATP_synth_F0_csu_sf"/>
</dbReference>
<dbReference type="InterPro" id="IPR002379">
    <property type="entry name" value="ATPase_proteolipid_c-like_dom"/>
</dbReference>
<dbReference type="InterPro" id="IPR035921">
    <property type="entry name" value="F/V-ATP_Csub_sf"/>
</dbReference>
<dbReference type="NCBIfam" id="NF005733">
    <property type="entry name" value="PRK07558.1"/>
    <property type="match status" value="1"/>
</dbReference>
<dbReference type="PANTHER" id="PTHR10031">
    <property type="entry name" value="ATP SYNTHASE LIPID-BINDING PROTEIN, MITOCHONDRIAL"/>
    <property type="match status" value="1"/>
</dbReference>
<dbReference type="PANTHER" id="PTHR10031:SF0">
    <property type="entry name" value="ATPASE PROTEIN 9"/>
    <property type="match status" value="1"/>
</dbReference>
<dbReference type="Pfam" id="PF00137">
    <property type="entry name" value="ATP-synt_C"/>
    <property type="match status" value="1"/>
</dbReference>
<dbReference type="PRINTS" id="PR00124">
    <property type="entry name" value="ATPASEC"/>
</dbReference>
<dbReference type="SUPFAM" id="SSF81333">
    <property type="entry name" value="F1F0 ATP synthase subunit C"/>
    <property type="match status" value="1"/>
</dbReference>
<reference key="1">
    <citation type="journal article" date="2006" name="PLoS Genet.">
        <title>Comparative genomics of emerging human ehrlichiosis agents.</title>
        <authorList>
            <person name="Dunning Hotopp J.C."/>
            <person name="Lin M."/>
            <person name="Madupu R."/>
            <person name="Crabtree J."/>
            <person name="Angiuoli S.V."/>
            <person name="Eisen J.A."/>
            <person name="Seshadri R."/>
            <person name="Ren Q."/>
            <person name="Wu M."/>
            <person name="Utterback T.R."/>
            <person name="Smith S."/>
            <person name="Lewis M."/>
            <person name="Khouri H."/>
            <person name="Zhang C."/>
            <person name="Niu H."/>
            <person name="Lin Q."/>
            <person name="Ohashi N."/>
            <person name="Zhi N."/>
            <person name="Nelson W.C."/>
            <person name="Brinkac L.M."/>
            <person name="Dodson R.J."/>
            <person name="Rosovitz M.J."/>
            <person name="Sundaram J.P."/>
            <person name="Daugherty S.C."/>
            <person name="Davidsen T."/>
            <person name="Durkin A.S."/>
            <person name="Gwinn M.L."/>
            <person name="Haft D.H."/>
            <person name="Selengut J.D."/>
            <person name="Sullivan S.A."/>
            <person name="Zafar N."/>
            <person name="Zhou L."/>
            <person name="Benahmed F."/>
            <person name="Forberger H."/>
            <person name="Halpin R."/>
            <person name="Mulligan S."/>
            <person name="Robinson J."/>
            <person name="White O."/>
            <person name="Rikihisa Y."/>
            <person name="Tettelin H."/>
        </authorList>
    </citation>
    <scope>NUCLEOTIDE SEQUENCE [LARGE SCALE GENOMIC DNA]</scope>
    <source>
        <strain>ATCC VR-367 / Miyayama</strain>
    </source>
</reference>
<comment type="function">
    <text evidence="1">F(1)F(0) ATP synthase produces ATP from ADP in the presence of a proton or sodium gradient. F-type ATPases consist of two structural domains, F(1) containing the extramembraneous catalytic core and F(0) containing the membrane proton channel, linked together by a central stalk and a peripheral stalk. During catalysis, ATP synthesis in the catalytic domain of F(1) is coupled via a rotary mechanism of the central stalk subunits to proton translocation.</text>
</comment>
<comment type="function">
    <text evidence="1">Key component of the F(0) channel; it plays a direct role in translocation across the membrane. A homomeric c-ring of between 10-14 subunits forms the central stalk rotor element with the F(1) delta and epsilon subunits.</text>
</comment>
<comment type="subunit">
    <text evidence="1">F-type ATPases have 2 components, F(1) - the catalytic core - and F(0) - the membrane proton channel. F(1) has five subunits: alpha(3), beta(3), gamma(1), delta(1), epsilon(1). F(0) has three main subunits: a(1), b(2) and c(10-14). The alpha and beta chains form an alternating ring which encloses part of the gamma chain. F(1) is attached to F(0) by a central stalk formed by the gamma and epsilon chains, while a peripheral stalk is formed by the delta and b chains.</text>
</comment>
<comment type="subcellular location">
    <subcellularLocation>
        <location evidence="1">Cell inner membrane</location>
        <topology evidence="1">Multi-pass membrane protein</topology>
    </subcellularLocation>
</comment>
<comment type="similarity">
    <text evidence="1">Belongs to the ATPase C chain family.</text>
</comment>
<keyword id="KW-0066">ATP synthesis</keyword>
<keyword id="KW-0997">Cell inner membrane</keyword>
<keyword id="KW-1003">Cell membrane</keyword>
<keyword id="KW-0138">CF(0)</keyword>
<keyword id="KW-0375">Hydrogen ion transport</keyword>
<keyword id="KW-0406">Ion transport</keyword>
<keyword id="KW-0446">Lipid-binding</keyword>
<keyword id="KW-0472">Membrane</keyword>
<keyword id="KW-0812">Transmembrane</keyword>
<keyword id="KW-1133">Transmembrane helix</keyword>
<keyword id="KW-0813">Transport</keyword>